<feature type="chain" id="PRO_0000283766" description="Homeobox protein otx5-B">
    <location>
        <begin position="1"/>
        <end position="290"/>
    </location>
</feature>
<feature type="DNA-binding region" description="Homeobox" evidence="1">
    <location>
        <begin position="38"/>
        <end position="97"/>
    </location>
</feature>
<feature type="region of interest" description="Disordered" evidence="2">
    <location>
        <begin position="93"/>
        <end position="142"/>
    </location>
</feature>
<feature type="compositionally biased region" description="Polar residues" evidence="2">
    <location>
        <begin position="94"/>
        <end position="103"/>
    </location>
</feature>
<feature type="compositionally biased region" description="Polar residues" evidence="2">
    <location>
        <begin position="116"/>
        <end position="129"/>
    </location>
</feature>
<accession>Q9PT61</accession>
<dbReference type="EMBL" id="AJ251846">
    <property type="protein sequence ID" value="CAB63872.1"/>
    <property type="molecule type" value="mRNA"/>
</dbReference>
<dbReference type="EMBL" id="BC077545">
    <property type="protein sequence ID" value="AAH77545.1"/>
    <property type="molecule type" value="mRNA"/>
</dbReference>
<dbReference type="SMR" id="Q9PT61"/>
<dbReference type="DNASU" id="398118"/>
<dbReference type="GeneID" id="398118"/>
<dbReference type="KEGG" id="xla:398118"/>
<dbReference type="AGR" id="Xenbase:XB-GENE-865179"/>
<dbReference type="CTD" id="398118"/>
<dbReference type="Xenbase" id="XB-GENE-865179">
    <property type="gene designation" value="crx.L"/>
</dbReference>
<dbReference type="OMA" id="CMQRSTG"/>
<dbReference type="OrthoDB" id="6159439at2759"/>
<dbReference type="Proteomes" id="UP000186698">
    <property type="component" value="Chromosome 8L"/>
</dbReference>
<dbReference type="GO" id="GO:0005634">
    <property type="term" value="C:nucleus"/>
    <property type="evidence" value="ECO:0000314"/>
    <property type="project" value="UniProtKB"/>
</dbReference>
<dbReference type="GO" id="GO:0000981">
    <property type="term" value="F:DNA-binding transcription factor activity, RNA polymerase II-specific"/>
    <property type="evidence" value="ECO:0000318"/>
    <property type="project" value="GO_Central"/>
</dbReference>
<dbReference type="GO" id="GO:0000978">
    <property type="term" value="F:RNA polymerase II cis-regulatory region sequence-specific DNA binding"/>
    <property type="evidence" value="ECO:0000318"/>
    <property type="project" value="GO_Central"/>
</dbReference>
<dbReference type="GO" id="GO:0009952">
    <property type="term" value="P:anterior/posterior pattern specification"/>
    <property type="evidence" value="ECO:0000315"/>
    <property type="project" value="UniProtKB"/>
</dbReference>
<dbReference type="GO" id="GO:0042706">
    <property type="term" value="P:eye photoreceptor cell fate commitment"/>
    <property type="evidence" value="ECO:0000315"/>
    <property type="project" value="UniProtKB"/>
</dbReference>
<dbReference type="GO" id="GO:0045944">
    <property type="term" value="P:positive regulation of transcription by RNA polymerase II"/>
    <property type="evidence" value="ECO:0000315"/>
    <property type="project" value="GO_Central"/>
</dbReference>
<dbReference type="GO" id="GO:0006357">
    <property type="term" value="P:regulation of transcription by RNA polymerase II"/>
    <property type="evidence" value="ECO:0000318"/>
    <property type="project" value="GO_Central"/>
</dbReference>
<dbReference type="CDD" id="cd00086">
    <property type="entry name" value="homeodomain"/>
    <property type="match status" value="1"/>
</dbReference>
<dbReference type="FunFam" id="1.10.10.60:FF:000142">
    <property type="entry name" value="homeobox protein OTX2 isoform X2"/>
    <property type="match status" value="1"/>
</dbReference>
<dbReference type="Gene3D" id="1.10.10.60">
    <property type="entry name" value="Homeodomain-like"/>
    <property type="match status" value="1"/>
</dbReference>
<dbReference type="InterPro" id="IPR001356">
    <property type="entry name" value="HD"/>
</dbReference>
<dbReference type="InterPro" id="IPR017970">
    <property type="entry name" value="Homeobox_CS"/>
</dbReference>
<dbReference type="InterPro" id="IPR009057">
    <property type="entry name" value="Homeodomain-like_sf"/>
</dbReference>
<dbReference type="InterPro" id="IPR003025">
    <property type="entry name" value="Otx_TF"/>
</dbReference>
<dbReference type="InterPro" id="IPR013851">
    <property type="entry name" value="Otx_TF_C"/>
</dbReference>
<dbReference type="PANTHER" id="PTHR45793:SF22">
    <property type="entry name" value="CONE-ROD HOMEOBOX PROTEIN"/>
    <property type="match status" value="1"/>
</dbReference>
<dbReference type="PANTHER" id="PTHR45793">
    <property type="entry name" value="HOMEOBOX PROTEIN"/>
    <property type="match status" value="1"/>
</dbReference>
<dbReference type="Pfam" id="PF00046">
    <property type="entry name" value="Homeodomain"/>
    <property type="match status" value="1"/>
</dbReference>
<dbReference type="Pfam" id="PF03529">
    <property type="entry name" value="TF_Otx"/>
    <property type="match status" value="1"/>
</dbReference>
<dbReference type="PRINTS" id="PR01255">
    <property type="entry name" value="OTXHOMEOBOX"/>
</dbReference>
<dbReference type="SMART" id="SM00389">
    <property type="entry name" value="HOX"/>
    <property type="match status" value="1"/>
</dbReference>
<dbReference type="SUPFAM" id="SSF46689">
    <property type="entry name" value="Homeodomain-like"/>
    <property type="match status" value="1"/>
</dbReference>
<dbReference type="PROSITE" id="PS00027">
    <property type="entry name" value="HOMEOBOX_1"/>
    <property type="match status" value="1"/>
</dbReference>
<dbReference type="PROSITE" id="PS50071">
    <property type="entry name" value="HOMEOBOX_2"/>
    <property type="match status" value="1"/>
</dbReference>
<evidence type="ECO:0000255" key="1">
    <source>
        <dbReference type="PROSITE-ProRule" id="PRU00108"/>
    </source>
</evidence>
<evidence type="ECO:0000256" key="2">
    <source>
        <dbReference type="SAM" id="MobiDB-lite"/>
    </source>
</evidence>
<evidence type="ECO:0000269" key="3">
    <source>
    </source>
</evidence>
<evidence type="ECO:0000269" key="4">
    <source>
    </source>
</evidence>
<evidence type="ECO:0000269" key="5">
    <source>
    </source>
</evidence>
<evidence type="ECO:0000269" key="6">
    <source>
    </source>
</evidence>
<evidence type="ECO:0000269" key="7">
    <source>
    </source>
</evidence>
<evidence type="ECO:0000305" key="8"/>
<evidence type="ECO:0000312" key="9">
    <source>
        <dbReference type="EMBL" id="AAH77545.1"/>
    </source>
</evidence>
<evidence type="ECO:0000312" key="10">
    <source>
        <dbReference type="EMBL" id="CAB63872.1"/>
    </source>
</evidence>
<proteinExistence type="evidence at transcript level"/>
<comment type="function">
    <text evidence="3 4 5 6 7">Transcription factor involved in anterior and eye development. Promotes the differentiation of both rod and cone photoreceptors cells in the retina. Together with other retinal homeobox proteins, acts as an effector of a cellular clock which, depending on cell cycle progression, establishes the generation of distinct retinal neuronal cell types. Acts synergistically with nrl to activate the rhodopsin promoter. Promotes the formation of anterior regions and represses the formation of posterior structures during development.</text>
</comment>
<comment type="subcellular location">
    <subcellularLocation>
        <location evidence="1 7">Nucleus</location>
    </subcellularLocation>
</comment>
<comment type="tissue specificity">
    <text evidence="3 4 7">Initially expressed in the Spemann organizer of early gastrula embryos. Expression in the organizer begins to decrease during late gastrulation and has disappeared by stage 11.5. Expression then persists and intensifies in the anterior neuroectoderm. Exhibits a dynamic expression pattern during neurulation and by neural tube closure (stage 20), expression is restricted to the cement gland anlage and epiphysis (pineal gland) anlagen. During tailbud stages, expression in the cement gland decreases and from stage 24, expression appears in the neural retina. By stage 37, expression becomes restricted to the outer and inner nuclear layers of the retina and the ciliary marginal zone (CMZ; the source of retinal growth). In mature embryonic retinas (stage 42), expressed preferentially in photoreceptors and in a subset of bipolar cells. Translation occurs during late retinogenesis and requires cell cycle progression with the timing of translation paralleling that of the generation of photoreceptor cells. In the CMZ, translation begins in early post-mitotic cells.</text>
</comment>
<organism>
    <name type="scientific">Xenopus laevis</name>
    <name type="common">African clawed frog</name>
    <dbReference type="NCBI Taxonomy" id="8355"/>
    <lineage>
        <taxon>Eukaryota</taxon>
        <taxon>Metazoa</taxon>
        <taxon>Chordata</taxon>
        <taxon>Craniata</taxon>
        <taxon>Vertebrata</taxon>
        <taxon>Euteleostomi</taxon>
        <taxon>Amphibia</taxon>
        <taxon>Batrachia</taxon>
        <taxon>Anura</taxon>
        <taxon>Pipoidea</taxon>
        <taxon>Pipidae</taxon>
        <taxon>Xenopodinae</taxon>
        <taxon>Xenopus</taxon>
        <taxon>Xenopus</taxon>
    </lineage>
</organism>
<gene>
    <name type="primary">otx5-b</name>
    <name evidence="10" type="synonym">otx5b</name>
</gene>
<reference evidence="8 10" key="1">
    <citation type="journal article" date="2000" name="Mech. Dev.">
        <title>Xotx5b, a new member of the Otx gene family, may be involved in anterior and eye development in Xenopus laevis.</title>
        <authorList>
            <person name="Vignali R."/>
            <person name="Colombetti S."/>
            <person name="Lupo G."/>
            <person name="Zhang W."/>
            <person name="Stachel S."/>
            <person name="Harland R.M."/>
            <person name="Barsacchi G."/>
        </authorList>
    </citation>
    <scope>NUCLEOTIDE SEQUENCE [MRNA]</scope>
    <scope>FUNCTION</scope>
    <scope>TISSUE SPECIFICITY</scope>
    <source>
        <tissue evidence="10">Head</tissue>
    </source>
</reference>
<reference evidence="9" key="2">
    <citation type="submission" date="2004-07" db="EMBL/GenBank/DDBJ databases">
        <authorList>
            <consortium name="NIH - Xenopus Gene Collection (XGC) project"/>
        </authorList>
    </citation>
    <scope>NUCLEOTIDE SEQUENCE [LARGE SCALE MRNA]</scope>
    <source>
        <tissue evidence="9">Brain</tissue>
    </source>
</reference>
<reference evidence="8" key="3">
    <citation type="journal article" date="2003" name="Development">
        <title>XOtx5b and XOtx2 regulate photoreceptor and bipolar fates in the Xenopus retina.</title>
        <authorList>
            <person name="Viczian A.S."/>
            <person name="Vignali R."/>
            <person name="Zuber M.E."/>
            <person name="Barsacchi G."/>
            <person name="Harris W.A."/>
        </authorList>
    </citation>
    <scope>FUNCTION</scope>
    <scope>TISSUE SPECIFICITY</scope>
</reference>
<reference evidence="8" key="4">
    <citation type="journal article" date="2004" name="J. Biol. Chem.">
        <title>Conserved transcriptional activators of the Xenopus rhodopsin gene.</title>
        <authorList>
            <person name="Whitaker S.L."/>
            <person name="Knox B.E."/>
        </authorList>
    </citation>
    <scope>FUNCTION</scope>
</reference>
<reference evidence="8" key="5">
    <citation type="journal article" date="2005" name="Dev. Biol.">
        <title>The role of combinational coding by homeodomain and bHLH transcription factors in retinal cell fate specification.</title>
        <authorList>
            <person name="Wang J.C.-C."/>
            <person name="Harris W.A."/>
        </authorList>
    </citation>
    <scope>FUNCTION</scope>
</reference>
<reference evidence="8" key="6">
    <citation type="journal article" date="2006" name="PLoS Biol.">
        <title>Timing the generation of distinct retinal cells by homeobox proteins.</title>
        <authorList>
            <person name="Decembrini S."/>
            <person name="Andreazzoli M."/>
            <person name="Vignali R."/>
            <person name="Barsacchi G."/>
            <person name="Cremisi F."/>
        </authorList>
    </citation>
    <scope>FUNCTION</scope>
    <scope>SUBCELLULAR LOCATION</scope>
    <scope>TISSUE SPECIFICITY</scope>
</reference>
<keyword id="KW-0217">Developmental protein</keyword>
<keyword id="KW-0221">Differentiation</keyword>
<keyword id="KW-0238">DNA-binding</keyword>
<keyword id="KW-0371">Homeobox</keyword>
<keyword id="KW-0539">Nucleus</keyword>
<keyword id="KW-1185">Reference proteome</keyword>
<keyword id="KW-0804">Transcription</keyword>
<keyword id="KW-0805">Transcription regulation</keyword>
<sequence>MMSYIKQPHYAVNGLTLAGTGMDLLHSAVGYPTNPRKQRRERTTFTRAQLDILESLFAKTRYPDIFMREEVALKINLPESRVQVWFKNRRAKCRQQQQQSTGQAKPRPAKKKTSPARETNSEASTNGQYSPPPPGTAVTPSSSASATVSIWSPASISPIPDPLSAVTNPCMQRSTGYPMTYSQAPAYTQSYGGSSSYFTGLDCGSYLSPMHPQLSAPGATLSPIATPTMGSHLSQSPASLSAQGYGAASLGFTSVDCLDYKDQTASWKLNFNATDCLDYKDQSSWKFQVL</sequence>
<protein>
    <recommendedName>
        <fullName>Homeobox protein otx5-B</fullName>
    </recommendedName>
    <alternativeName>
        <fullName>Orthodenticle homolog 5-B</fullName>
    </alternativeName>
    <alternativeName>
        <fullName>XOtx5b</fullName>
    </alternativeName>
</protein>
<name>OTX5B_XENLA</name>